<reference key="1">
    <citation type="journal article" date="1995" name="J. Biol. Chem.">
        <title>Epithelial membrane protein-1, peripheral myelin protein 22, and lens membrane protein 20 define a novel gene family.</title>
        <authorList>
            <person name="Taylor V."/>
            <person name="Welcher A.A."/>
            <person name="Suter U."/>
        </authorList>
    </citation>
    <scope>NUCLEOTIDE SEQUENCE [MRNA]</scope>
    <source>
        <tissue>Intestine</tissue>
    </source>
</reference>
<reference key="2">
    <citation type="journal article" date="2004" name="Genome Res.">
        <title>The status, quality, and expansion of the NIH full-length cDNA project: the Mammalian Gene Collection (MGC).</title>
        <authorList>
            <consortium name="The MGC Project Team"/>
        </authorList>
    </citation>
    <scope>NUCLEOTIDE SEQUENCE [LARGE SCALE MRNA]</scope>
    <source>
        <tissue>Heart</tissue>
    </source>
</reference>
<keyword id="KW-0325">Glycoprotein</keyword>
<keyword id="KW-0472">Membrane</keyword>
<keyword id="KW-1185">Reference proteome</keyword>
<keyword id="KW-0812">Transmembrane</keyword>
<keyword id="KW-1133">Transmembrane helix</keyword>
<gene>
    <name type="primary">Emp1</name>
</gene>
<proteinExistence type="evidence at transcript level"/>
<protein>
    <recommendedName>
        <fullName>Epithelial membrane protein 1</fullName>
        <shortName>EMP-1</shortName>
    </recommendedName>
    <alternativeName>
        <fullName>Tumor-associated membrane protein</fullName>
    </alternativeName>
</protein>
<sequence length="160" mass="17826">MLVLLAGLFVVHIATAIMLFVSTIANVWMVADGIDSSIGLWKNCTSGSCDGSLSYGNDDAIKAVQAFMILSIIFSIISLVVFVFQLFTMEKGNRFFLSGSTMLVCWLCILIGVSIYTHHYAHSEGNFFPSSHQGYCFILTWICFCFSFIIGILYMVLRKK</sequence>
<name>EMP1_RAT</name>
<feature type="chain" id="PRO_0000164657" description="Epithelial membrane protein 1">
    <location>
        <begin position="1"/>
        <end position="160"/>
    </location>
</feature>
<feature type="transmembrane region" description="Helical" evidence="1">
    <location>
        <begin position="1"/>
        <end position="21"/>
    </location>
</feature>
<feature type="transmembrane region" description="Helical" evidence="1">
    <location>
        <begin position="67"/>
        <end position="87"/>
    </location>
</feature>
<feature type="transmembrane region" description="Helical" evidence="1">
    <location>
        <begin position="95"/>
        <end position="115"/>
    </location>
</feature>
<feature type="transmembrane region" description="Helical" evidence="1">
    <location>
        <begin position="137"/>
        <end position="157"/>
    </location>
</feature>
<feature type="glycosylation site" description="N-linked (GlcNAc...) asparagine" evidence="1">
    <location>
        <position position="43"/>
    </location>
</feature>
<comment type="subcellular location">
    <subcellularLocation>
        <location>Membrane</location>
        <topology>Multi-pass membrane protein</topology>
    </subcellularLocation>
</comment>
<comment type="tissue specificity">
    <text>Most prominently found in the gastrointestinal tract, skin, lung, and brain but not in liver.</text>
</comment>
<comment type="similarity">
    <text evidence="2">Belongs to the PMP-22/EMP/MP20 family.</text>
</comment>
<dbReference type="EMBL" id="Z54212">
    <property type="protein sequence ID" value="CAA90939.1"/>
    <property type="molecule type" value="mRNA"/>
</dbReference>
<dbReference type="EMBL" id="BC087031">
    <property type="protein sequence ID" value="AAH87031.1"/>
    <property type="molecule type" value="mRNA"/>
</dbReference>
<dbReference type="RefSeq" id="NP_036975.1">
    <property type="nucleotide sequence ID" value="NM_012843.2"/>
</dbReference>
<dbReference type="RefSeq" id="XP_008761591.1">
    <property type="nucleotide sequence ID" value="XM_008763369.2"/>
</dbReference>
<dbReference type="RefSeq" id="XP_063141658.1">
    <property type="nucleotide sequence ID" value="XM_063285588.1"/>
</dbReference>
<dbReference type="RefSeq" id="XP_063141659.1">
    <property type="nucleotide sequence ID" value="XM_063285589.1"/>
</dbReference>
<dbReference type="RefSeq" id="XP_063141660.1">
    <property type="nucleotide sequence ID" value="XM_063285590.1"/>
</dbReference>
<dbReference type="SMR" id="P54848"/>
<dbReference type="FunCoup" id="P54848">
    <property type="interactions" value="435"/>
</dbReference>
<dbReference type="STRING" id="10116.ENSRNOP00000011580"/>
<dbReference type="GlyCosmos" id="P54848">
    <property type="glycosylation" value="1 site, No reported glycans"/>
</dbReference>
<dbReference type="GlyGen" id="P54848">
    <property type="glycosylation" value="1 site"/>
</dbReference>
<dbReference type="PhosphoSitePlus" id="P54848"/>
<dbReference type="PaxDb" id="10116-ENSRNOP00000011580"/>
<dbReference type="Ensembl" id="ENSRNOT00000011580.7">
    <property type="protein sequence ID" value="ENSRNOP00000011580.3"/>
    <property type="gene ID" value="ENSRNOG00000008676.7"/>
</dbReference>
<dbReference type="GeneID" id="25314"/>
<dbReference type="KEGG" id="rno:25314"/>
<dbReference type="UCSC" id="RGD:2552">
    <property type="organism name" value="rat"/>
</dbReference>
<dbReference type="AGR" id="RGD:2552"/>
<dbReference type="CTD" id="2012"/>
<dbReference type="RGD" id="2552">
    <property type="gene designation" value="Emp1"/>
</dbReference>
<dbReference type="eggNOG" id="ENOG502S028">
    <property type="taxonomic scope" value="Eukaryota"/>
</dbReference>
<dbReference type="GeneTree" id="ENSGT00950000182696"/>
<dbReference type="HOGENOM" id="CLU_138632_0_1_1"/>
<dbReference type="InParanoid" id="P54848"/>
<dbReference type="OMA" id="CWMCILI"/>
<dbReference type="OrthoDB" id="48103at9989"/>
<dbReference type="PhylomeDB" id="P54848"/>
<dbReference type="TreeFam" id="TF330414"/>
<dbReference type="PRO" id="PR:P54848"/>
<dbReference type="Proteomes" id="UP000002494">
    <property type="component" value="Chromosome 4"/>
</dbReference>
<dbReference type="Bgee" id="ENSRNOG00000008676">
    <property type="expression patterns" value="Expressed in esophagus and 18 other cell types or tissues"/>
</dbReference>
<dbReference type="GO" id="GO:0005886">
    <property type="term" value="C:plasma membrane"/>
    <property type="evidence" value="ECO:0000266"/>
    <property type="project" value="RGD"/>
</dbReference>
<dbReference type="GO" id="GO:0006915">
    <property type="term" value="P:apoptotic process"/>
    <property type="evidence" value="ECO:0000266"/>
    <property type="project" value="RGD"/>
</dbReference>
<dbReference type="GO" id="GO:0032060">
    <property type="term" value="P:bleb assembly"/>
    <property type="evidence" value="ECO:0000266"/>
    <property type="project" value="RGD"/>
</dbReference>
<dbReference type="FunFam" id="1.20.140.150:FF:000026">
    <property type="entry name" value="Epithelial membrane protein 1"/>
    <property type="match status" value="1"/>
</dbReference>
<dbReference type="Gene3D" id="1.20.140.150">
    <property type="match status" value="1"/>
</dbReference>
<dbReference type="InterPro" id="IPR003932">
    <property type="entry name" value="EMP_1"/>
</dbReference>
<dbReference type="InterPro" id="IPR050579">
    <property type="entry name" value="PMP-22/EMP/MP20-like"/>
</dbReference>
<dbReference type="InterPro" id="IPR004031">
    <property type="entry name" value="PMP22/EMP/MP20/Claudin"/>
</dbReference>
<dbReference type="InterPro" id="IPR004032">
    <property type="entry name" value="PMP22_EMP_MP20"/>
</dbReference>
<dbReference type="PANTHER" id="PTHR10671:SF6">
    <property type="entry name" value="EPITHELIAL MEMBRANE PROTEIN 1"/>
    <property type="match status" value="1"/>
</dbReference>
<dbReference type="PANTHER" id="PTHR10671">
    <property type="entry name" value="EPITHELIAL MEMBRANE PROTEIN-RELATED"/>
    <property type="match status" value="1"/>
</dbReference>
<dbReference type="Pfam" id="PF00822">
    <property type="entry name" value="PMP22_Claudin"/>
    <property type="match status" value="1"/>
</dbReference>
<dbReference type="PRINTS" id="PR01453">
    <property type="entry name" value="EPMEMFAMILY"/>
</dbReference>
<dbReference type="PRINTS" id="PR01454">
    <property type="entry name" value="EPMEMPROT1"/>
</dbReference>
<dbReference type="PROSITE" id="PS01221">
    <property type="entry name" value="PMP22_1"/>
    <property type="match status" value="1"/>
</dbReference>
<dbReference type="PROSITE" id="PS01222">
    <property type="entry name" value="PMP22_2"/>
    <property type="match status" value="1"/>
</dbReference>
<accession>P54848</accession>
<organism>
    <name type="scientific">Rattus norvegicus</name>
    <name type="common">Rat</name>
    <dbReference type="NCBI Taxonomy" id="10116"/>
    <lineage>
        <taxon>Eukaryota</taxon>
        <taxon>Metazoa</taxon>
        <taxon>Chordata</taxon>
        <taxon>Craniata</taxon>
        <taxon>Vertebrata</taxon>
        <taxon>Euteleostomi</taxon>
        <taxon>Mammalia</taxon>
        <taxon>Eutheria</taxon>
        <taxon>Euarchontoglires</taxon>
        <taxon>Glires</taxon>
        <taxon>Rodentia</taxon>
        <taxon>Myomorpha</taxon>
        <taxon>Muroidea</taxon>
        <taxon>Muridae</taxon>
        <taxon>Murinae</taxon>
        <taxon>Rattus</taxon>
    </lineage>
</organism>
<evidence type="ECO:0000255" key="1"/>
<evidence type="ECO:0000305" key="2"/>